<reference key="1">
    <citation type="submission" date="2006-03" db="EMBL/GenBank/DDBJ databases">
        <title>Complete sequence of chromosome of Nitrobacter hamburgensis X14.</title>
        <authorList>
            <consortium name="US DOE Joint Genome Institute"/>
            <person name="Copeland A."/>
            <person name="Lucas S."/>
            <person name="Lapidus A."/>
            <person name="Barry K."/>
            <person name="Detter J.C."/>
            <person name="Glavina del Rio T."/>
            <person name="Hammon N."/>
            <person name="Israni S."/>
            <person name="Dalin E."/>
            <person name="Tice H."/>
            <person name="Pitluck S."/>
            <person name="Chain P."/>
            <person name="Malfatti S."/>
            <person name="Shin M."/>
            <person name="Vergez L."/>
            <person name="Schmutz J."/>
            <person name="Larimer F."/>
            <person name="Land M."/>
            <person name="Hauser L."/>
            <person name="Kyrpides N."/>
            <person name="Ivanova N."/>
            <person name="Ward B."/>
            <person name="Arp D."/>
            <person name="Klotz M."/>
            <person name="Stein L."/>
            <person name="O'Mullan G."/>
            <person name="Starkenburg S."/>
            <person name="Sayavedra L."/>
            <person name="Poret-Peterson A.T."/>
            <person name="Gentry M.E."/>
            <person name="Bruce D."/>
            <person name="Richardson P."/>
        </authorList>
    </citation>
    <scope>NUCLEOTIDE SEQUENCE [LARGE SCALE GENOMIC DNA]</scope>
    <source>
        <strain>DSM 10229 / NCIMB 13809 / X14</strain>
    </source>
</reference>
<proteinExistence type="inferred from homology"/>
<sequence length="287" mass="29681">MNQSVSAAPVVSAGSVTFGQDRPLSIIAGPCQMESRAHALEVAGALKEIAARLNIGLVFKTSFDKANRTSASGARGLGLKQALPVFAEIGSSLGLPVLTDVHEAAQCTEVAQAVDVLQIPAFLCRQTDLLLAAAATGKVVNVKKGQFLAPWDMANVVAKITGGGNPNVLVTERGASFGYNTLVSDMRSLPILARTTGAPVIFDATHSVQQPGGNGTSSGGEREFVPVLARAAVAVGVAGVFIETHPDPDHAPSDGPNMVPLREFEALVRRLMAFDALAKAADPALPK</sequence>
<feature type="chain" id="PRO_0000304462" description="2-dehydro-3-deoxyphosphooctonate aldolase">
    <location>
        <begin position="1"/>
        <end position="287"/>
    </location>
</feature>
<organism>
    <name type="scientific">Nitrobacter hamburgensis (strain DSM 10229 / NCIMB 13809 / X14)</name>
    <dbReference type="NCBI Taxonomy" id="323097"/>
    <lineage>
        <taxon>Bacteria</taxon>
        <taxon>Pseudomonadati</taxon>
        <taxon>Pseudomonadota</taxon>
        <taxon>Alphaproteobacteria</taxon>
        <taxon>Hyphomicrobiales</taxon>
        <taxon>Nitrobacteraceae</taxon>
        <taxon>Nitrobacter</taxon>
    </lineage>
</organism>
<comment type="catalytic activity">
    <reaction evidence="1">
        <text>D-arabinose 5-phosphate + phosphoenolpyruvate + H2O = 3-deoxy-alpha-D-manno-2-octulosonate-8-phosphate + phosphate</text>
        <dbReference type="Rhea" id="RHEA:14053"/>
        <dbReference type="ChEBI" id="CHEBI:15377"/>
        <dbReference type="ChEBI" id="CHEBI:43474"/>
        <dbReference type="ChEBI" id="CHEBI:57693"/>
        <dbReference type="ChEBI" id="CHEBI:58702"/>
        <dbReference type="ChEBI" id="CHEBI:85985"/>
        <dbReference type="EC" id="2.5.1.55"/>
    </reaction>
</comment>
<comment type="pathway">
    <text evidence="1">Carbohydrate biosynthesis; 3-deoxy-D-manno-octulosonate biosynthesis; 3-deoxy-D-manno-octulosonate from D-ribulose 5-phosphate: step 2/3.</text>
</comment>
<comment type="pathway">
    <text evidence="1">Bacterial outer membrane biogenesis; lipopolysaccharide biosynthesis.</text>
</comment>
<comment type="subcellular location">
    <subcellularLocation>
        <location evidence="1">Cytoplasm</location>
    </subcellularLocation>
</comment>
<comment type="similarity">
    <text evidence="1">Belongs to the KdsA family.</text>
</comment>
<accession>Q1QMJ3</accession>
<dbReference type="EC" id="2.5.1.55" evidence="1"/>
<dbReference type="EMBL" id="CP000319">
    <property type="protein sequence ID" value="ABE62554.1"/>
    <property type="molecule type" value="Genomic_DNA"/>
</dbReference>
<dbReference type="RefSeq" id="WP_011510236.1">
    <property type="nucleotide sequence ID" value="NC_007964.1"/>
</dbReference>
<dbReference type="SMR" id="Q1QMJ3"/>
<dbReference type="STRING" id="323097.Nham_1739"/>
<dbReference type="KEGG" id="nha:Nham_1739"/>
<dbReference type="eggNOG" id="COG2877">
    <property type="taxonomic scope" value="Bacteria"/>
</dbReference>
<dbReference type="HOGENOM" id="CLU_036666_0_0_5"/>
<dbReference type="OrthoDB" id="9776934at2"/>
<dbReference type="UniPathway" id="UPA00030"/>
<dbReference type="UniPathway" id="UPA00357">
    <property type="reaction ID" value="UER00474"/>
</dbReference>
<dbReference type="Proteomes" id="UP000001953">
    <property type="component" value="Chromosome"/>
</dbReference>
<dbReference type="GO" id="GO:0005737">
    <property type="term" value="C:cytoplasm"/>
    <property type="evidence" value="ECO:0007669"/>
    <property type="project" value="UniProtKB-SubCell"/>
</dbReference>
<dbReference type="GO" id="GO:0008676">
    <property type="term" value="F:3-deoxy-8-phosphooctulonate synthase activity"/>
    <property type="evidence" value="ECO:0007669"/>
    <property type="project" value="UniProtKB-UniRule"/>
</dbReference>
<dbReference type="GO" id="GO:0019294">
    <property type="term" value="P:keto-3-deoxy-D-manno-octulosonic acid biosynthetic process"/>
    <property type="evidence" value="ECO:0007669"/>
    <property type="project" value="UniProtKB-UniRule"/>
</dbReference>
<dbReference type="Gene3D" id="3.20.20.70">
    <property type="entry name" value="Aldolase class I"/>
    <property type="match status" value="1"/>
</dbReference>
<dbReference type="HAMAP" id="MF_00056">
    <property type="entry name" value="KDO8P_synth"/>
    <property type="match status" value="1"/>
</dbReference>
<dbReference type="InterPro" id="IPR013785">
    <property type="entry name" value="Aldolase_TIM"/>
</dbReference>
<dbReference type="InterPro" id="IPR006218">
    <property type="entry name" value="DAHP1/KDSA"/>
</dbReference>
<dbReference type="InterPro" id="IPR006269">
    <property type="entry name" value="KDO8P_synthase"/>
</dbReference>
<dbReference type="NCBIfam" id="TIGR01362">
    <property type="entry name" value="KDO8P_synth"/>
    <property type="match status" value="1"/>
</dbReference>
<dbReference type="NCBIfam" id="NF003543">
    <property type="entry name" value="PRK05198.1"/>
    <property type="match status" value="1"/>
</dbReference>
<dbReference type="PANTHER" id="PTHR21057">
    <property type="entry name" value="PHOSPHO-2-DEHYDRO-3-DEOXYHEPTONATE ALDOLASE"/>
    <property type="match status" value="1"/>
</dbReference>
<dbReference type="Pfam" id="PF00793">
    <property type="entry name" value="DAHP_synth_1"/>
    <property type="match status" value="1"/>
</dbReference>
<dbReference type="SUPFAM" id="SSF51569">
    <property type="entry name" value="Aldolase"/>
    <property type="match status" value="1"/>
</dbReference>
<keyword id="KW-0963">Cytoplasm</keyword>
<keyword id="KW-0448">Lipopolysaccharide biosynthesis</keyword>
<keyword id="KW-1185">Reference proteome</keyword>
<keyword id="KW-0808">Transferase</keyword>
<protein>
    <recommendedName>
        <fullName evidence="1">2-dehydro-3-deoxyphosphooctonate aldolase</fullName>
        <ecNumber evidence="1">2.5.1.55</ecNumber>
    </recommendedName>
    <alternativeName>
        <fullName evidence="1">3-deoxy-D-manno-octulosonic acid 8-phosphate synthase</fullName>
    </alternativeName>
    <alternativeName>
        <fullName evidence="1">KDO-8-phosphate synthase</fullName>
        <shortName evidence="1">KDO 8-P synthase</shortName>
        <shortName evidence="1">KDOPS</shortName>
    </alternativeName>
    <alternativeName>
        <fullName evidence="1">Phospho-2-dehydro-3-deoxyoctonate aldolase</fullName>
    </alternativeName>
</protein>
<name>KDSA_NITHX</name>
<gene>
    <name evidence="1" type="primary">kdsA</name>
    <name type="ordered locus">Nham_1739</name>
</gene>
<evidence type="ECO:0000255" key="1">
    <source>
        <dbReference type="HAMAP-Rule" id="MF_00056"/>
    </source>
</evidence>